<dbReference type="EMBL" id="M11620">
    <property type="protein sequence ID" value="AAA28260.1"/>
    <property type="molecule type" value="mRNA"/>
</dbReference>
<dbReference type="PIR" id="A02547">
    <property type="entry name" value="GGICE8"/>
</dbReference>
<dbReference type="SMR" id="P12548"/>
<dbReference type="Allergome" id="207">
    <property type="allergen name" value="Chi t 3"/>
</dbReference>
<dbReference type="Allergome" id="3195">
    <property type="allergen name" value="Chi t 3.0501"/>
</dbReference>
<dbReference type="GO" id="GO:0005576">
    <property type="term" value="C:extracellular region"/>
    <property type="evidence" value="ECO:0007669"/>
    <property type="project" value="InterPro"/>
</dbReference>
<dbReference type="GO" id="GO:0005833">
    <property type="term" value="C:hemoglobin complex"/>
    <property type="evidence" value="ECO:0007669"/>
    <property type="project" value="InterPro"/>
</dbReference>
<dbReference type="GO" id="GO:0020037">
    <property type="term" value="F:heme binding"/>
    <property type="evidence" value="ECO:0007669"/>
    <property type="project" value="InterPro"/>
</dbReference>
<dbReference type="GO" id="GO:0046872">
    <property type="term" value="F:metal ion binding"/>
    <property type="evidence" value="ECO:0007669"/>
    <property type="project" value="UniProtKB-KW"/>
</dbReference>
<dbReference type="GO" id="GO:0019825">
    <property type="term" value="F:oxygen binding"/>
    <property type="evidence" value="ECO:0007669"/>
    <property type="project" value="InterPro"/>
</dbReference>
<dbReference type="GO" id="GO:0005344">
    <property type="term" value="F:oxygen carrier activity"/>
    <property type="evidence" value="ECO:0007669"/>
    <property type="project" value="UniProtKB-KW"/>
</dbReference>
<dbReference type="CDD" id="cd01040">
    <property type="entry name" value="Mb-like"/>
    <property type="match status" value="1"/>
</dbReference>
<dbReference type="Gene3D" id="1.10.490.10">
    <property type="entry name" value="Globins"/>
    <property type="match status" value="1"/>
</dbReference>
<dbReference type="InterPro" id="IPR002336">
    <property type="entry name" value="Erythrocruorin"/>
</dbReference>
<dbReference type="InterPro" id="IPR000971">
    <property type="entry name" value="Globin"/>
</dbReference>
<dbReference type="InterPro" id="IPR009050">
    <property type="entry name" value="Globin-like_sf"/>
</dbReference>
<dbReference type="InterPro" id="IPR012292">
    <property type="entry name" value="Globin/Proto"/>
</dbReference>
<dbReference type="InterPro" id="IPR044399">
    <property type="entry name" value="Mb-like_M"/>
</dbReference>
<dbReference type="PANTHER" id="PTHR47217">
    <property type="entry name" value="GLOBIN-LIKE PROTEIN"/>
    <property type="match status" value="1"/>
</dbReference>
<dbReference type="PANTHER" id="PTHR47217:SF1">
    <property type="entry name" value="GLOBIN-LIKE PROTEIN"/>
    <property type="match status" value="1"/>
</dbReference>
<dbReference type="Pfam" id="PF00042">
    <property type="entry name" value="Globin"/>
    <property type="match status" value="1"/>
</dbReference>
<dbReference type="PRINTS" id="PR00611">
    <property type="entry name" value="ERYTHCRUORIN"/>
</dbReference>
<dbReference type="SUPFAM" id="SSF46458">
    <property type="entry name" value="Globin-like"/>
    <property type="match status" value="1"/>
</dbReference>
<dbReference type="PROSITE" id="PS01033">
    <property type="entry name" value="GLOBIN"/>
    <property type="match status" value="1"/>
</dbReference>
<reference key="1">
    <citation type="journal article" date="1985" name="Biochem. Biophys. Res. Commun.">
        <title>Deoxynucleotide sequence of an insect cDNA codes for an unreported member of the Chironomus thummi globin family.</title>
        <authorList>
            <person name="Saffarini D.A."/>
            <person name="Trewitt P.M."/>
            <person name="Castro M."/>
            <person name="Wejksnora P.J."/>
            <person name="Bergtrom G."/>
        </authorList>
    </citation>
    <scope>NUCLEOTIDE SEQUENCE [MRNA]</scope>
</reference>
<reference key="2">
    <citation type="journal article" date="1979" name="Hoppe-Seyler's Z. Physiol. Chem.">
        <title>Hemoglobins, XXVI. Analysis of the primary structure of the dimeric insect haemoglobin CTT VIIB (Erythrocruorin) from Chironomus thummi thummi, Diptera.</title>
        <authorList>
            <person name="Sladic-Simic D."/>
            <person name="Kleinschmidt T."/>
            <person name="Braunitzer G."/>
        </authorList>
    </citation>
    <scope>PROTEIN SEQUENCE OF 17-161 (MIXTURE OF ISOZYMES)</scope>
</reference>
<sequence>MKFFAVLALCIVGAIASPLTADEASLVQSSWKAVSHNEVDILAAVFAAYPDIQAKFPQFAGKDLASIKDTGAFATHATRIVSFLSEVIALSGNESNASAVNSLVSKLGDDHKARGVSAAQFGEFRTALVAYLSNHVSWGDNVAAAWNKALDNTYAIVVPRL</sequence>
<keyword id="KW-0903">Direct protein sequencing</keyword>
<keyword id="KW-0349">Heme</keyword>
<keyword id="KW-0408">Iron</keyword>
<keyword id="KW-0479">Metal-binding</keyword>
<keyword id="KW-0561">Oxygen transport</keyword>
<keyword id="KW-0732">Signal</keyword>
<keyword id="KW-0813">Transport</keyword>
<feature type="signal peptide" evidence="2">
    <location>
        <begin position="1"/>
        <end position="16"/>
    </location>
</feature>
<feature type="chain" id="PRO_0000011194" description="Globin CTT-VIIB-3">
    <location>
        <begin position="17"/>
        <end position="161"/>
    </location>
</feature>
<feature type="domain" description="Globin" evidence="1">
    <location>
        <begin position="18"/>
        <end position="161"/>
    </location>
</feature>
<feature type="binding site" description="distal binding residue" evidence="1">
    <location>
        <position position="76"/>
    </location>
    <ligand>
        <name>heme b</name>
        <dbReference type="ChEBI" id="CHEBI:60344"/>
    </ligand>
    <ligandPart>
        <name>Fe</name>
        <dbReference type="ChEBI" id="CHEBI:18248"/>
    </ligandPart>
</feature>
<feature type="binding site" description="proximal binding residue" evidence="1">
    <location>
        <position position="111"/>
    </location>
    <ligand>
        <name>heme b</name>
        <dbReference type="ChEBI" id="CHEBI:60344"/>
    </ligand>
    <ligandPart>
        <name>Fe</name>
        <dbReference type="ChEBI" id="CHEBI:18248"/>
    </ligandPart>
</feature>
<comment type="subunit">
    <text>Homodimer.</text>
</comment>
<comment type="miscellaneous">
    <text>There are at least 12 different components in Midge globin.</text>
</comment>
<comment type="miscellaneous">
    <text>There are at least nine genes for VIIB variants.</text>
</comment>
<comment type="similarity">
    <text evidence="1">Belongs to the globin family.</text>
</comment>
<proteinExistence type="evidence at protein level"/>
<name>GLB73_CHITH</name>
<evidence type="ECO:0000255" key="1">
    <source>
        <dbReference type="PROSITE-ProRule" id="PRU00238"/>
    </source>
</evidence>
<evidence type="ECO:0000269" key="2">
    <source>
    </source>
</evidence>
<organism>
    <name type="scientific">Chironomus thummi thummi</name>
    <name type="common">Midge</name>
    <dbReference type="NCBI Taxonomy" id="7155"/>
    <lineage>
        <taxon>Eukaryota</taxon>
        <taxon>Metazoa</taxon>
        <taxon>Ecdysozoa</taxon>
        <taxon>Arthropoda</taxon>
        <taxon>Hexapoda</taxon>
        <taxon>Insecta</taxon>
        <taxon>Pterygota</taxon>
        <taxon>Neoptera</taxon>
        <taxon>Endopterygota</taxon>
        <taxon>Diptera</taxon>
        <taxon>Nematocera</taxon>
        <taxon>Chironomoidea</taxon>
        <taxon>Chironomidae</taxon>
        <taxon>Chironominae</taxon>
        <taxon>Chironomus</taxon>
    </lineage>
</organism>
<protein>
    <recommendedName>
        <fullName>Globin CTT-VIIB-3</fullName>
    </recommendedName>
</protein>
<gene>
    <name type="primary">CTT-7B3</name>
</gene>
<accession>P12548</accession>
<accession>P02225</accession>